<accession>A5CVI6</accession>
<reference key="1">
    <citation type="journal article" date="2007" name="Curr. Biol.">
        <title>Reduced genome of the thioautotrophic intracellular symbiont in a deep-sea clam, Calyptogena okutanii.</title>
        <authorList>
            <person name="Kuwahara H."/>
            <person name="Yoshida T."/>
            <person name="Takaki Y."/>
            <person name="Shimamura S."/>
            <person name="Nishi S."/>
            <person name="Harada M."/>
            <person name="Matsuyama K."/>
            <person name="Takishita K."/>
            <person name="Kawato M."/>
            <person name="Uematsu K."/>
            <person name="Fujiwara Y."/>
            <person name="Sato T."/>
            <person name="Kato C."/>
            <person name="Kitagawa M."/>
            <person name="Kato I."/>
            <person name="Maruyama T."/>
        </authorList>
    </citation>
    <scope>NUCLEOTIDE SEQUENCE [LARGE SCALE GENOMIC DNA]</scope>
    <source>
        <strain>HA</strain>
    </source>
</reference>
<feature type="chain" id="PRO_1000055179" description="ATP synthase subunit beta">
    <location>
        <begin position="1"/>
        <end position="459"/>
    </location>
</feature>
<feature type="binding site" evidence="1">
    <location>
        <begin position="148"/>
        <end position="155"/>
    </location>
    <ligand>
        <name>ATP</name>
        <dbReference type="ChEBI" id="CHEBI:30616"/>
    </ligand>
</feature>
<proteinExistence type="inferred from homology"/>
<dbReference type="EC" id="7.1.2.2" evidence="1"/>
<dbReference type="EMBL" id="AP009247">
    <property type="protein sequence ID" value="BAF62044.1"/>
    <property type="molecule type" value="Genomic_DNA"/>
</dbReference>
<dbReference type="RefSeq" id="WP_011930313.1">
    <property type="nucleotide sequence ID" value="NC_009465.1"/>
</dbReference>
<dbReference type="SMR" id="A5CVI6"/>
<dbReference type="STRING" id="412965.COSY_0945"/>
<dbReference type="KEGG" id="vok:COSY_0945"/>
<dbReference type="eggNOG" id="COG0055">
    <property type="taxonomic scope" value="Bacteria"/>
</dbReference>
<dbReference type="HOGENOM" id="CLU_022398_0_2_6"/>
<dbReference type="OrthoDB" id="9801639at2"/>
<dbReference type="Proteomes" id="UP000000247">
    <property type="component" value="Chromosome"/>
</dbReference>
<dbReference type="GO" id="GO:0005886">
    <property type="term" value="C:plasma membrane"/>
    <property type="evidence" value="ECO:0007669"/>
    <property type="project" value="UniProtKB-SubCell"/>
</dbReference>
<dbReference type="GO" id="GO:0045259">
    <property type="term" value="C:proton-transporting ATP synthase complex"/>
    <property type="evidence" value="ECO:0007669"/>
    <property type="project" value="UniProtKB-KW"/>
</dbReference>
<dbReference type="GO" id="GO:0005524">
    <property type="term" value="F:ATP binding"/>
    <property type="evidence" value="ECO:0007669"/>
    <property type="project" value="UniProtKB-UniRule"/>
</dbReference>
<dbReference type="GO" id="GO:0016887">
    <property type="term" value="F:ATP hydrolysis activity"/>
    <property type="evidence" value="ECO:0007669"/>
    <property type="project" value="InterPro"/>
</dbReference>
<dbReference type="GO" id="GO:0046933">
    <property type="term" value="F:proton-transporting ATP synthase activity, rotational mechanism"/>
    <property type="evidence" value="ECO:0007669"/>
    <property type="project" value="UniProtKB-UniRule"/>
</dbReference>
<dbReference type="CDD" id="cd18110">
    <property type="entry name" value="ATP-synt_F1_beta_C"/>
    <property type="match status" value="1"/>
</dbReference>
<dbReference type="CDD" id="cd18115">
    <property type="entry name" value="ATP-synt_F1_beta_N"/>
    <property type="match status" value="1"/>
</dbReference>
<dbReference type="CDD" id="cd01133">
    <property type="entry name" value="F1-ATPase_beta_CD"/>
    <property type="match status" value="1"/>
</dbReference>
<dbReference type="FunFam" id="1.10.1140.10:FF:000001">
    <property type="entry name" value="ATP synthase subunit beta"/>
    <property type="match status" value="1"/>
</dbReference>
<dbReference type="FunFam" id="3.40.50.300:FF:000004">
    <property type="entry name" value="ATP synthase subunit beta"/>
    <property type="match status" value="1"/>
</dbReference>
<dbReference type="Gene3D" id="2.40.10.170">
    <property type="match status" value="1"/>
</dbReference>
<dbReference type="Gene3D" id="1.10.1140.10">
    <property type="entry name" value="Bovine Mitochondrial F1-atpase, Atp Synthase Beta Chain, Chain D, domain 3"/>
    <property type="match status" value="1"/>
</dbReference>
<dbReference type="Gene3D" id="3.40.50.300">
    <property type="entry name" value="P-loop containing nucleotide triphosphate hydrolases"/>
    <property type="match status" value="1"/>
</dbReference>
<dbReference type="HAMAP" id="MF_01347">
    <property type="entry name" value="ATP_synth_beta_bact"/>
    <property type="match status" value="1"/>
</dbReference>
<dbReference type="InterPro" id="IPR003593">
    <property type="entry name" value="AAA+_ATPase"/>
</dbReference>
<dbReference type="InterPro" id="IPR055190">
    <property type="entry name" value="ATP-synt_VA_C"/>
</dbReference>
<dbReference type="InterPro" id="IPR005722">
    <property type="entry name" value="ATP_synth_F1_bsu"/>
</dbReference>
<dbReference type="InterPro" id="IPR020003">
    <property type="entry name" value="ATPase_a/bsu_AS"/>
</dbReference>
<dbReference type="InterPro" id="IPR050053">
    <property type="entry name" value="ATPase_alpha/beta_chains"/>
</dbReference>
<dbReference type="InterPro" id="IPR004100">
    <property type="entry name" value="ATPase_F1/V1/A1_a/bsu_N"/>
</dbReference>
<dbReference type="InterPro" id="IPR036121">
    <property type="entry name" value="ATPase_F1/V1/A1_a/bsu_N_sf"/>
</dbReference>
<dbReference type="InterPro" id="IPR000194">
    <property type="entry name" value="ATPase_F1/V1/A1_a/bsu_nucl-bd"/>
</dbReference>
<dbReference type="InterPro" id="IPR024034">
    <property type="entry name" value="ATPase_F1/V1_b/a_C"/>
</dbReference>
<dbReference type="InterPro" id="IPR027417">
    <property type="entry name" value="P-loop_NTPase"/>
</dbReference>
<dbReference type="NCBIfam" id="TIGR01039">
    <property type="entry name" value="atpD"/>
    <property type="match status" value="1"/>
</dbReference>
<dbReference type="PANTHER" id="PTHR15184">
    <property type="entry name" value="ATP SYNTHASE"/>
    <property type="match status" value="1"/>
</dbReference>
<dbReference type="PANTHER" id="PTHR15184:SF71">
    <property type="entry name" value="ATP SYNTHASE SUBUNIT BETA, MITOCHONDRIAL"/>
    <property type="match status" value="1"/>
</dbReference>
<dbReference type="Pfam" id="PF00006">
    <property type="entry name" value="ATP-synt_ab"/>
    <property type="match status" value="1"/>
</dbReference>
<dbReference type="Pfam" id="PF02874">
    <property type="entry name" value="ATP-synt_ab_N"/>
    <property type="match status" value="1"/>
</dbReference>
<dbReference type="Pfam" id="PF22919">
    <property type="entry name" value="ATP-synt_VA_C"/>
    <property type="match status" value="1"/>
</dbReference>
<dbReference type="SMART" id="SM00382">
    <property type="entry name" value="AAA"/>
    <property type="match status" value="1"/>
</dbReference>
<dbReference type="SUPFAM" id="SSF47917">
    <property type="entry name" value="C-terminal domain of alpha and beta subunits of F1 ATP synthase"/>
    <property type="match status" value="1"/>
</dbReference>
<dbReference type="SUPFAM" id="SSF50615">
    <property type="entry name" value="N-terminal domain of alpha and beta subunits of F1 ATP synthase"/>
    <property type="match status" value="1"/>
</dbReference>
<dbReference type="SUPFAM" id="SSF52540">
    <property type="entry name" value="P-loop containing nucleoside triphosphate hydrolases"/>
    <property type="match status" value="1"/>
</dbReference>
<dbReference type="PROSITE" id="PS00152">
    <property type="entry name" value="ATPASE_ALPHA_BETA"/>
    <property type="match status" value="1"/>
</dbReference>
<protein>
    <recommendedName>
        <fullName evidence="1">ATP synthase subunit beta</fullName>
        <ecNumber evidence="1">7.1.2.2</ecNumber>
    </recommendedName>
    <alternativeName>
        <fullName evidence="1">ATP synthase F1 sector subunit beta</fullName>
    </alternativeName>
    <alternativeName>
        <fullName evidence="1">F-ATPase subunit beta</fullName>
    </alternativeName>
</protein>
<evidence type="ECO:0000255" key="1">
    <source>
        <dbReference type="HAMAP-Rule" id="MF_01347"/>
    </source>
</evidence>
<gene>
    <name evidence="1" type="primary">atpD</name>
    <name type="ordered locus">COSY_0945</name>
</gene>
<name>ATPB_VESOH</name>
<sequence length="459" mass="49909">MSIGKITQIIGAVIDVEFSADNMPKIYDALKVLETGLTLEVQQQLGDHIVRAIAMGGSEGLKRGLGVTNTGEPIKVPVGVKTLGRIMNVLGEPIDNAGEIGQEVDWTIHRSAPDYDELAPTTELLETGIKVIDLICPFAKGGKVGLFGGAGVGKTVNMMELIRNIAIAHSGYSVFAGVGERTREGNDFYHEMKESNVLNKVSLVYGQMNEPPGNRLRVALTGLTMAEYFRDEGRDVLLFIDNIYRYTLAGTEVSALLGRMPSAVGYQPTLASEMGALQERITSTKKGSITSIQAVYVPADDLTDPSPATTFAHLDATVVLSRQVAELGIYPAVDPLDSTSRQLDPLIVGEEHYNVARGVQGVLQRYKELKDIIAILGMDELSEEDKRSVSRARKVQRFLSQPFFVAEVFTGAPGKYVSLKDTIAGFKAILDGEMDDFPEQVFYMTGSIDEVRGRSKEKA</sequence>
<comment type="function">
    <text evidence="1">Produces ATP from ADP in the presence of a proton gradient across the membrane. The catalytic sites are hosted primarily by the beta subunits.</text>
</comment>
<comment type="catalytic activity">
    <reaction evidence="1">
        <text>ATP + H2O + 4 H(+)(in) = ADP + phosphate + 5 H(+)(out)</text>
        <dbReference type="Rhea" id="RHEA:57720"/>
        <dbReference type="ChEBI" id="CHEBI:15377"/>
        <dbReference type="ChEBI" id="CHEBI:15378"/>
        <dbReference type="ChEBI" id="CHEBI:30616"/>
        <dbReference type="ChEBI" id="CHEBI:43474"/>
        <dbReference type="ChEBI" id="CHEBI:456216"/>
        <dbReference type="EC" id="7.1.2.2"/>
    </reaction>
</comment>
<comment type="subunit">
    <text evidence="1">F-type ATPases have 2 components, CF(1) - the catalytic core - and CF(0) - the membrane proton channel. CF(1) has five subunits: alpha(3), beta(3), gamma(1), delta(1), epsilon(1). CF(0) has three main subunits: a(1), b(2) and c(9-12). The alpha and beta chains form an alternating ring which encloses part of the gamma chain. CF(1) is attached to CF(0) by a central stalk formed by the gamma and epsilon chains, while a peripheral stalk is formed by the delta and b chains.</text>
</comment>
<comment type="subcellular location">
    <subcellularLocation>
        <location evidence="1">Cell inner membrane</location>
        <topology evidence="1">Peripheral membrane protein</topology>
    </subcellularLocation>
</comment>
<comment type="similarity">
    <text evidence="1">Belongs to the ATPase alpha/beta chains family.</text>
</comment>
<organism>
    <name type="scientific">Vesicomyosocius okutanii subsp. Calyptogena okutanii (strain HA)</name>
    <dbReference type="NCBI Taxonomy" id="412965"/>
    <lineage>
        <taxon>Bacteria</taxon>
        <taxon>Pseudomonadati</taxon>
        <taxon>Pseudomonadota</taxon>
        <taxon>Gammaproteobacteria</taxon>
        <taxon>Candidatus Pseudothioglobaceae</taxon>
        <taxon>Candidatus Vesicomyosocius</taxon>
    </lineage>
</organism>
<keyword id="KW-0066">ATP synthesis</keyword>
<keyword id="KW-0067">ATP-binding</keyword>
<keyword id="KW-0997">Cell inner membrane</keyword>
<keyword id="KW-1003">Cell membrane</keyword>
<keyword id="KW-0139">CF(1)</keyword>
<keyword id="KW-0375">Hydrogen ion transport</keyword>
<keyword id="KW-0406">Ion transport</keyword>
<keyword id="KW-0472">Membrane</keyword>
<keyword id="KW-0547">Nucleotide-binding</keyword>
<keyword id="KW-1185">Reference proteome</keyword>
<keyword id="KW-1278">Translocase</keyword>
<keyword id="KW-0813">Transport</keyword>